<organism>
    <name type="scientific">Cyriopagopus schmidti</name>
    <name type="common">Chinese bird spider</name>
    <name type="synonym">Haplopelma schmidti</name>
    <dbReference type="NCBI Taxonomy" id="29017"/>
    <lineage>
        <taxon>Eukaryota</taxon>
        <taxon>Metazoa</taxon>
        <taxon>Ecdysozoa</taxon>
        <taxon>Arthropoda</taxon>
        <taxon>Chelicerata</taxon>
        <taxon>Arachnida</taxon>
        <taxon>Araneae</taxon>
        <taxon>Mygalomorphae</taxon>
        <taxon>Theraphosidae</taxon>
        <taxon>Cyriopagopus</taxon>
    </lineage>
</organism>
<proteinExistence type="inferred from homology"/>
<comment type="function">
    <text evidence="2">Serine protease inhibitor that inhibits trypsin at a molar ratio of 1:1.</text>
</comment>
<comment type="subcellular location">
    <subcellularLocation>
        <location evidence="8">Secreted</location>
    </subcellularLocation>
</comment>
<comment type="tissue specificity">
    <text evidence="8">Expressed by the venom gland.</text>
</comment>
<comment type="similarity">
    <text evidence="7">Belongs to the venom Kunitz-type family. 03 (sub-Kunitz) subfamily.</text>
</comment>
<protein>
    <recommendedName>
        <fullName>Kunitz-type U15-theraphotoxin-Hs1d</fullName>
        <shortName>U15-TRTX-Hs1d</shortName>
    </recommendedName>
    <alternativeName>
        <fullName evidence="6">Huwentoxin HW11c13</fullName>
    </alternativeName>
    <alternativeName>
        <fullName evidence="5">Kunitz-type serine protease inhibitor HWTX-XI-IS13</fullName>
    </alternativeName>
</protein>
<reference key="1">
    <citation type="journal article" date="2008" name="PLoS ONE">
        <title>Discovery of a distinct superfamily of Kunitz-type toxin (KTT) from tarantulas.</title>
        <authorList>
            <person name="Yuan C.-H."/>
            <person name="He Q.-Y."/>
            <person name="Peng K."/>
            <person name="Diao J.-B."/>
            <person name="Jiang L.-P."/>
            <person name="Tang X."/>
            <person name="Liang S.-P."/>
        </authorList>
    </citation>
    <scope>NUCLEOTIDE SEQUENCE [MRNA]</scope>
    <source>
        <tissue>Venom gland</tissue>
    </source>
</reference>
<reference evidence="9" key="2">
    <citation type="journal article" date="2014" name="Peptides">
        <title>Molecular cloning, bioinformatics analysis and functional characterization of HWTX-XI toxin superfamily from the spider Ornithoctonus huwena.</title>
        <authorList>
            <person name="Jiang L."/>
            <person name="Deng M."/>
            <person name="Duan Z."/>
            <person name="Tang X."/>
            <person name="Liang S."/>
        </authorList>
    </citation>
    <scope>NUCLEOTIDE SEQUENCE [GENOMIC DNA]</scope>
</reference>
<sequence>MGTARFLSAVLLLSVLLMVTFPALLSAEYHDGRVDICSLPSDSGDCLRFFEMWYFDGTTCTKFVYGGYGGNGNRFPTEKACMKRCVKA</sequence>
<evidence type="ECO:0000250" key="1"/>
<evidence type="ECO:0000250" key="2">
    <source>
        <dbReference type="UniProtKB" id="P68425"/>
    </source>
</evidence>
<evidence type="ECO:0000255" key="3"/>
<evidence type="ECO:0000255" key="4">
    <source>
        <dbReference type="PROSITE-ProRule" id="PRU00031"/>
    </source>
</evidence>
<evidence type="ECO:0000303" key="5">
    <source>
    </source>
</evidence>
<evidence type="ECO:0000303" key="6">
    <source>
    </source>
</evidence>
<evidence type="ECO:0000305" key="7"/>
<evidence type="ECO:0000305" key="8">
    <source>
    </source>
</evidence>
<evidence type="ECO:0000312" key="9">
    <source>
        <dbReference type="EMBL" id="AHY30310.1"/>
    </source>
</evidence>
<keyword id="KW-1015">Disulfide bond</keyword>
<keyword id="KW-0646">Protease inhibitor</keyword>
<keyword id="KW-0964">Secreted</keyword>
<keyword id="KW-0722">Serine protease inhibitor</keyword>
<keyword id="KW-0732">Signal</keyword>
<accession>P0DJ79</accession>
<accession>A0A023WAI7</accession>
<feature type="signal peptide" evidence="3">
    <location>
        <begin position="1"/>
        <end position="27"/>
    </location>
</feature>
<feature type="propeptide" id="PRO_0000413832" evidence="1">
    <location>
        <begin position="28"/>
        <end position="33"/>
    </location>
</feature>
<feature type="chain" id="PRO_0000413833" description="Kunitz-type U15-theraphotoxin-Hs1d">
    <location>
        <begin position="34"/>
        <end position="88"/>
    </location>
</feature>
<feature type="domain" description="BPTI/Kunitz inhibitor" evidence="4">
    <location>
        <begin position="37"/>
        <end position="85"/>
    </location>
</feature>
<feature type="site" description="May bind Kv1" evidence="1">
    <location>
        <position position="39"/>
    </location>
</feature>
<feature type="site" description="Reactive bond for chymotrypsin" evidence="1">
    <location>
        <begin position="47"/>
        <end position="48"/>
    </location>
</feature>
<feature type="disulfide bond" evidence="4">
    <location>
        <begin position="37"/>
        <end position="85"/>
    </location>
</feature>
<feature type="disulfide bond" evidence="4">
    <location>
        <begin position="60"/>
        <end position="81"/>
    </location>
</feature>
<name>VKT13_CYRSC</name>
<dbReference type="EMBL" id="KF160299">
    <property type="protein sequence ID" value="AHY30310.1"/>
    <property type="molecule type" value="Genomic_DNA"/>
</dbReference>
<dbReference type="SMR" id="P0DJ79"/>
<dbReference type="ArachnoServer" id="AS001705">
    <property type="toxin name" value="U15-theraphotoxin-Hs1d"/>
</dbReference>
<dbReference type="GO" id="GO:0005615">
    <property type="term" value="C:extracellular space"/>
    <property type="evidence" value="ECO:0007669"/>
    <property type="project" value="TreeGrafter"/>
</dbReference>
<dbReference type="GO" id="GO:0015459">
    <property type="term" value="F:potassium channel regulator activity"/>
    <property type="evidence" value="ECO:0007669"/>
    <property type="project" value="UniProtKB-KW"/>
</dbReference>
<dbReference type="GO" id="GO:0004867">
    <property type="term" value="F:serine-type endopeptidase inhibitor activity"/>
    <property type="evidence" value="ECO:0007669"/>
    <property type="project" value="UniProtKB-KW"/>
</dbReference>
<dbReference type="GO" id="GO:0090729">
    <property type="term" value="F:toxin activity"/>
    <property type="evidence" value="ECO:0007669"/>
    <property type="project" value="UniProtKB-KW"/>
</dbReference>
<dbReference type="GO" id="GO:0044562">
    <property type="term" value="P:envenomation resulting in negative regulation of voltage-gated potassium channel activity in another organism"/>
    <property type="evidence" value="ECO:0007669"/>
    <property type="project" value="UniProtKB-ARBA"/>
</dbReference>
<dbReference type="CDD" id="cd22598">
    <property type="entry name" value="Kunitz_huwentoxin"/>
    <property type="match status" value="1"/>
</dbReference>
<dbReference type="FunFam" id="4.10.410.10:FF:000020">
    <property type="entry name" value="Collagen, type VI, alpha 3"/>
    <property type="match status" value="1"/>
</dbReference>
<dbReference type="Gene3D" id="4.10.410.10">
    <property type="entry name" value="Pancreatic trypsin inhibitor Kunitz domain"/>
    <property type="match status" value="1"/>
</dbReference>
<dbReference type="InterPro" id="IPR002223">
    <property type="entry name" value="Kunitz_BPTI"/>
</dbReference>
<dbReference type="InterPro" id="IPR036880">
    <property type="entry name" value="Kunitz_BPTI_sf"/>
</dbReference>
<dbReference type="InterPro" id="IPR050098">
    <property type="entry name" value="TFPI/VKTCI-like"/>
</dbReference>
<dbReference type="PANTHER" id="PTHR10083">
    <property type="entry name" value="KUNITZ-TYPE PROTEASE INHIBITOR-RELATED"/>
    <property type="match status" value="1"/>
</dbReference>
<dbReference type="PANTHER" id="PTHR10083:SF328">
    <property type="entry name" value="TISSUE FACTOR PATHWAY INHIBITOR"/>
    <property type="match status" value="1"/>
</dbReference>
<dbReference type="Pfam" id="PF00014">
    <property type="entry name" value="Kunitz_BPTI"/>
    <property type="match status" value="1"/>
</dbReference>
<dbReference type="PRINTS" id="PR00759">
    <property type="entry name" value="BASICPTASE"/>
</dbReference>
<dbReference type="SMART" id="SM00131">
    <property type="entry name" value="KU"/>
    <property type="match status" value="1"/>
</dbReference>
<dbReference type="SUPFAM" id="SSF57362">
    <property type="entry name" value="BPTI-like"/>
    <property type="match status" value="1"/>
</dbReference>
<dbReference type="PROSITE" id="PS50279">
    <property type="entry name" value="BPTI_KUNITZ_2"/>
    <property type="match status" value="1"/>
</dbReference>